<keyword id="KW-0320">Glycogen biosynthesis</keyword>
<keyword id="KW-0328">Glycosyltransferase</keyword>
<keyword id="KW-0808">Transferase</keyword>
<sequence>MGHSVAGVCLEEPAVLTAFPSLLHPQDPPQQRDRILFVTAELSDFVKVGGLGDFSAALPRVLRRQHAVRVLLPGYRQVLERCSDLRILGSLPGRAAIPPCEIGLVTLDDGLEVMLVLCPLLYEREGTPYMDDQGNDWADNHLRFARLCLAAAEIAGGHGAQGWQPGLVHANDWPSALTPAYMAWNGVRTPSLFTIHNLAYQGLCDLQCSAELGLPDEALSPESMEFHGRLSFLKAGIAHAHHITTVSETYAQEITTPEYGCGLHGILKCKVEKRQLSGIVNGIDDSWQPHCDPHLVAGFSARQWAGKRANTRYVEERFGLEPGKGPLFAVVSRLVQQKGIDLTLEISDALLQAGGRLVSIGRGEPSLEKAMLDLSRRHPGQVGVHIGFDETDARRIYAGSDFLLMPSRYEPCGLSQLYAQCFGSLPIARCTGGLADTIVDGVTGFLFREETAQSYLDAVLRAINVYHCPALLNAMRCKAMAAPMFWRDSVEPYNRLYRRLLRNTAPAWRGVRP</sequence>
<evidence type="ECO:0000255" key="1">
    <source>
        <dbReference type="HAMAP-Rule" id="MF_00484"/>
    </source>
</evidence>
<name>GLGA_PSEP7</name>
<comment type="function">
    <text evidence="1">Synthesizes alpha-1,4-glucan chains using ADP-glucose.</text>
</comment>
<comment type="catalytic activity">
    <reaction evidence="1">
        <text>[(1-&gt;4)-alpha-D-glucosyl](n) + ADP-alpha-D-glucose = [(1-&gt;4)-alpha-D-glucosyl](n+1) + ADP + H(+)</text>
        <dbReference type="Rhea" id="RHEA:18189"/>
        <dbReference type="Rhea" id="RHEA-COMP:9584"/>
        <dbReference type="Rhea" id="RHEA-COMP:9587"/>
        <dbReference type="ChEBI" id="CHEBI:15378"/>
        <dbReference type="ChEBI" id="CHEBI:15444"/>
        <dbReference type="ChEBI" id="CHEBI:57498"/>
        <dbReference type="ChEBI" id="CHEBI:456216"/>
        <dbReference type="EC" id="2.4.1.21"/>
    </reaction>
</comment>
<comment type="pathway">
    <text evidence="1">Glycan biosynthesis; glycogen biosynthesis.</text>
</comment>
<comment type="similarity">
    <text evidence="1">Belongs to the glycosyltransferase 1 family. Bacterial/plant glycogen synthase subfamily.</text>
</comment>
<dbReference type="EC" id="2.4.1.21" evidence="1"/>
<dbReference type="EMBL" id="CP000744">
    <property type="protein sequence ID" value="ABR84969.1"/>
    <property type="molecule type" value="Genomic_DNA"/>
</dbReference>
<dbReference type="RefSeq" id="WP_012075900.1">
    <property type="nucleotide sequence ID" value="NC_009656.1"/>
</dbReference>
<dbReference type="SMR" id="A6V616"/>
<dbReference type="CAZy" id="GT5">
    <property type="family name" value="Glycosyltransferase Family 5"/>
</dbReference>
<dbReference type="KEGG" id="pap:PSPA7_3141"/>
<dbReference type="HOGENOM" id="CLU_009583_18_4_6"/>
<dbReference type="UniPathway" id="UPA00164"/>
<dbReference type="Proteomes" id="UP000001582">
    <property type="component" value="Chromosome"/>
</dbReference>
<dbReference type="GO" id="GO:0009011">
    <property type="term" value="F:alpha-1,4-glucan glucosyltransferase (ADP-glucose donor) activity"/>
    <property type="evidence" value="ECO:0007669"/>
    <property type="project" value="UniProtKB-UniRule"/>
</dbReference>
<dbReference type="GO" id="GO:0004373">
    <property type="term" value="F:alpha-1,4-glucan glucosyltransferase (UDP-glucose donor) activity"/>
    <property type="evidence" value="ECO:0007669"/>
    <property type="project" value="InterPro"/>
</dbReference>
<dbReference type="GO" id="GO:0005978">
    <property type="term" value="P:glycogen biosynthetic process"/>
    <property type="evidence" value="ECO:0007669"/>
    <property type="project" value="UniProtKB-UniRule"/>
</dbReference>
<dbReference type="CDD" id="cd03791">
    <property type="entry name" value="GT5_Glycogen_synthase_DULL1-like"/>
    <property type="match status" value="1"/>
</dbReference>
<dbReference type="Gene3D" id="3.40.50.2000">
    <property type="entry name" value="Glycogen Phosphorylase B"/>
    <property type="match status" value="2"/>
</dbReference>
<dbReference type="HAMAP" id="MF_00484">
    <property type="entry name" value="Glycogen_synth"/>
    <property type="match status" value="1"/>
</dbReference>
<dbReference type="InterPro" id="IPR001296">
    <property type="entry name" value="Glyco_trans_1"/>
</dbReference>
<dbReference type="InterPro" id="IPR011835">
    <property type="entry name" value="GS/SS"/>
</dbReference>
<dbReference type="InterPro" id="IPR013534">
    <property type="entry name" value="Starch_synth_cat_dom"/>
</dbReference>
<dbReference type="NCBIfam" id="TIGR02095">
    <property type="entry name" value="glgA"/>
    <property type="match status" value="1"/>
</dbReference>
<dbReference type="NCBIfam" id="NF001899">
    <property type="entry name" value="PRK00654.1-2"/>
    <property type="match status" value="1"/>
</dbReference>
<dbReference type="NCBIfam" id="NF001901">
    <property type="entry name" value="PRK00654.1-5"/>
    <property type="match status" value="1"/>
</dbReference>
<dbReference type="PANTHER" id="PTHR45825:SF8">
    <property type="entry name" value="GLYCOGEN SYNTHASE"/>
    <property type="match status" value="1"/>
</dbReference>
<dbReference type="PANTHER" id="PTHR45825">
    <property type="entry name" value="GRANULE-BOUND STARCH SYNTHASE 1, CHLOROPLASTIC/AMYLOPLASTIC"/>
    <property type="match status" value="1"/>
</dbReference>
<dbReference type="Pfam" id="PF08323">
    <property type="entry name" value="Glyco_transf_5"/>
    <property type="match status" value="1"/>
</dbReference>
<dbReference type="Pfam" id="PF00534">
    <property type="entry name" value="Glycos_transf_1"/>
    <property type="match status" value="1"/>
</dbReference>
<dbReference type="SUPFAM" id="SSF53756">
    <property type="entry name" value="UDP-Glycosyltransferase/glycogen phosphorylase"/>
    <property type="match status" value="1"/>
</dbReference>
<organism>
    <name type="scientific">Pseudomonas paraeruginosa (strain DSM 24068 / PA7)</name>
    <name type="common">Pseudomonas aeruginosa (strain PA7)</name>
    <dbReference type="NCBI Taxonomy" id="381754"/>
    <lineage>
        <taxon>Bacteria</taxon>
        <taxon>Pseudomonadati</taxon>
        <taxon>Pseudomonadota</taxon>
        <taxon>Gammaproteobacteria</taxon>
        <taxon>Pseudomonadales</taxon>
        <taxon>Pseudomonadaceae</taxon>
        <taxon>Pseudomonas</taxon>
        <taxon>Pseudomonas paraeruginosa</taxon>
    </lineage>
</organism>
<proteinExistence type="inferred from homology"/>
<accession>A6V616</accession>
<reference key="1">
    <citation type="submission" date="2007-06" db="EMBL/GenBank/DDBJ databases">
        <authorList>
            <person name="Dodson R.J."/>
            <person name="Harkins D."/>
            <person name="Paulsen I.T."/>
        </authorList>
    </citation>
    <scope>NUCLEOTIDE SEQUENCE [LARGE SCALE GENOMIC DNA]</scope>
    <source>
        <strain>DSM 24068 / PA7</strain>
    </source>
</reference>
<gene>
    <name evidence="1" type="primary">glgA</name>
    <name type="ordered locus">PSPA7_3141</name>
</gene>
<protein>
    <recommendedName>
        <fullName evidence="1">Glycogen synthase</fullName>
        <ecNumber evidence="1">2.4.1.21</ecNumber>
    </recommendedName>
    <alternativeName>
        <fullName evidence="1">Starch [bacterial glycogen] synthase</fullName>
    </alternativeName>
</protein>
<feature type="chain" id="PRO_1000014378" description="Glycogen synthase">
    <location>
        <begin position="1"/>
        <end position="513"/>
    </location>
</feature>
<feature type="binding site" evidence="1">
    <location>
        <position position="47"/>
    </location>
    <ligand>
        <name>ADP-alpha-D-glucose</name>
        <dbReference type="ChEBI" id="CHEBI:57498"/>
    </ligand>
</feature>